<sequence length="376" mass="41766">MCDDEVAALVVDNGSGMCKAGFAGDDAPRAVFPSIVGRPRHQGVMVGMGQKDSYVGDEAQSKRGILTLKYPIEHGIVTNWDDMEKIWHHTFYNELRVPPEEHPVLLTEAPLNPKANREKMTQIMFETFNAPAMYVAIQAVLSLYASGRTTGIVLDSGDGVTHTVPIYEGYALPHAILRLDLAGRDLTDYLSKILTERGYSFTTTAEREIVRDIKEKLCYVALDFEQEMATAASSSSLEKSYELPDGQVITIGNERFRCPESLFQPILLGMESAGIHETTYNSIMKCDVDIRKDLYANTVLSGGTTMFPGIADRMQKEITSLAPSTMKIKIIAPPERKYSVWIGGSILASLSTFQQMWISKQEYDESGPSIVHRKCF</sequence>
<name>ACTM_APLCA</name>
<protein>
    <recommendedName>
        <fullName>Actin, muscle</fullName>
        <ecNumber evidence="2">3.6.4.-</ecNumber>
    </recommendedName>
</protein>
<feature type="propeptide" id="PRO_0000000608" description="Removed in mature form" evidence="1">
    <location>
        <begin position="1"/>
        <end position="2"/>
    </location>
</feature>
<feature type="chain" id="PRO_0000000609" description="Actin, muscle">
    <location>
        <begin position="3"/>
        <end position="376"/>
    </location>
</feature>
<feature type="modified residue" description="N-acetylaspartate" evidence="1">
    <location>
        <position position="3"/>
    </location>
</feature>
<organism>
    <name type="scientific">Aplysia californica</name>
    <name type="common">California sea hare</name>
    <dbReference type="NCBI Taxonomy" id="6500"/>
    <lineage>
        <taxon>Eukaryota</taxon>
        <taxon>Metazoa</taxon>
        <taxon>Spiralia</taxon>
        <taxon>Lophotrochozoa</taxon>
        <taxon>Mollusca</taxon>
        <taxon>Gastropoda</taxon>
        <taxon>Heterobranchia</taxon>
        <taxon>Euthyneura</taxon>
        <taxon>Tectipleura</taxon>
        <taxon>Aplysiida</taxon>
        <taxon>Aplysioidea</taxon>
        <taxon>Aplysiidae</taxon>
        <taxon>Aplysia</taxon>
    </lineage>
</organism>
<keyword id="KW-0007">Acetylation</keyword>
<keyword id="KW-0067">ATP-binding</keyword>
<keyword id="KW-0963">Cytoplasm</keyword>
<keyword id="KW-0206">Cytoskeleton</keyword>
<keyword id="KW-0378">Hydrolase</keyword>
<keyword id="KW-0514">Muscle protein</keyword>
<keyword id="KW-0547">Nucleotide-binding</keyword>
<reference key="1">
    <citation type="journal article" date="1990" name="Nucleic Acids Res.">
        <title>Nucleotide sequence of an actin cDNA gene from Aplysia californica.</title>
        <authorList>
            <person name="Desgroseillers L."/>
            <person name="Auclair D."/>
            <person name="Wickham L."/>
        </authorList>
    </citation>
    <scope>NUCLEOTIDE SEQUENCE [MRNA]</scope>
    <source>
        <tissue>Muscle</tissue>
    </source>
</reference>
<accession>P17304</accession>
<proteinExistence type="evidence at transcript level"/>
<dbReference type="EC" id="3.6.4.-" evidence="2"/>
<dbReference type="EMBL" id="X52868">
    <property type="protein sequence ID" value="CAA37049.1"/>
    <property type="molecule type" value="mRNA"/>
</dbReference>
<dbReference type="PIR" id="S12730">
    <property type="entry name" value="S12730"/>
</dbReference>
<dbReference type="RefSeq" id="NP_001191580.1">
    <property type="nucleotide sequence ID" value="NM_001204651.1"/>
</dbReference>
<dbReference type="SMR" id="P17304"/>
<dbReference type="EnsemblMetazoa" id="NM_001204651.1">
    <property type="protein sequence ID" value="NP_001191580.1"/>
    <property type="gene ID" value="LOC100533357"/>
</dbReference>
<dbReference type="GeneID" id="100533357"/>
<dbReference type="OrthoDB" id="10249208at2759"/>
<dbReference type="Proteomes" id="UP000694888">
    <property type="component" value="Unplaced"/>
</dbReference>
<dbReference type="GO" id="GO:0005737">
    <property type="term" value="C:cytoplasm"/>
    <property type="evidence" value="ECO:0007669"/>
    <property type="project" value="UniProtKB-KW"/>
</dbReference>
<dbReference type="GO" id="GO:0005856">
    <property type="term" value="C:cytoskeleton"/>
    <property type="evidence" value="ECO:0007669"/>
    <property type="project" value="UniProtKB-SubCell"/>
</dbReference>
<dbReference type="GO" id="GO:0005524">
    <property type="term" value="F:ATP binding"/>
    <property type="evidence" value="ECO:0007669"/>
    <property type="project" value="UniProtKB-KW"/>
</dbReference>
<dbReference type="GO" id="GO:0016787">
    <property type="term" value="F:hydrolase activity"/>
    <property type="evidence" value="ECO:0007669"/>
    <property type="project" value="UniProtKB-KW"/>
</dbReference>
<dbReference type="CDD" id="cd10224">
    <property type="entry name" value="ASKHA_NBD_actin"/>
    <property type="match status" value="1"/>
</dbReference>
<dbReference type="FunFam" id="2.30.36.70:FF:000001">
    <property type="entry name" value="Actin, alpha skeletal muscle"/>
    <property type="match status" value="1"/>
</dbReference>
<dbReference type="FunFam" id="3.30.420.40:FF:000131">
    <property type="entry name" value="Actin, alpha skeletal muscle"/>
    <property type="match status" value="1"/>
</dbReference>
<dbReference type="FunFam" id="3.30.420.40:FF:000291">
    <property type="entry name" value="Actin, alpha skeletal muscle"/>
    <property type="match status" value="1"/>
</dbReference>
<dbReference type="FunFam" id="3.90.640.10:FF:000047">
    <property type="entry name" value="Actin, alpha skeletal muscle"/>
    <property type="match status" value="1"/>
</dbReference>
<dbReference type="FunFam" id="3.30.420.40:FF:000058">
    <property type="entry name" value="Putative actin-related protein 5"/>
    <property type="match status" value="1"/>
</dbReference>
<dbReference type="Gene3D" id="3.30.420.40">
    <property type="match status" value="2"/>
</dbReference>
<dbReference type="Gene3D" id="3.90.640.10">
    <property type="entry name" value="Actin, Chain A, domain 4"/>
    <property type="match status" value="1"/>
</dbReference>
<dbReference type="InterPro" id="IPR004000">
    <property type="entry name" value="Actin"/>
</dbReference>
<dbReference type="InterPro" id="IPR020902">
    <property type="entry name" value="Actin/actin-like_CS"/>
</dbReference>
<dbReference type="InterPro" id="IPR004001">
    <property type="entry name" value="Actin_CS"/>
</dbReference>
<dbReference type="InterPro" id="IPR043129">
    <property type="entry name" value="ATPase_NBD"/>
</dbReference>
<dbReference type="PANTHER" id="PTHR11937">
    <property type="entry name" value="ACTIN"/>
    <property type="match status" value="1"/>
</dbReference>
<dbReference type="Pfam" id="PF00022">
    <property type="entry name" value="Actin"/>
    <property type="match status" value="1"/>
</dbReference>
<dbReference type="PRINTS" id="PR00190">
    <property type="entry name" value="ACTIN"/>
</dbReference>
<dbReference type="SMART" id="SM00268">
    <property type="entry name" value="ACTIN"/>
    <property type="match status" value="1"/>
</dbReference>
<dbReference type="SUPFAM" id="SSF53067">
    <property type="entry name" value="Actin-like ATPase domain"/>
    <property type="match status" value="2"/>
</dbReference>
<dbReference type="PROSITE" id="PS00406">
    <property type="entry name" value="ACTINS_1"/>
    <property type="match status" value="1"/>
</dbReference>
<dbReference type="PROSITE" id="PS00432">
    <property type="entry name" value="ACTINS_2"/>
    <property type="match status" value="1"/>
</dbReference>
<dbReference type="PROSITE" id="PS01132">
    <property type="entry name" value="ACTINS_ACT_LIKE"/>
    <property type="match status" value="1"/>
</dbReference>
<comment type="function">
    <text>Actins are highly conserved proteins that are involved in various types of cell motility and are ubiquitously expressed in all eukaryotic cells.</text>
</comment>
<comment type="function">
    <text>Multiple isoforms are involved in various cellular functions such as cytoskeleton structure, cell mobility, chromosome movement and muscle contraction.</text>
</comment>
<comment type="catalytic activity">
    <reaction evidence="2">
        <text>ATP + H2O = ADP + phosphate + H(+)</text>
        <dbReference type="Rhea" id="RHEA:13065"/>
        <dbReference type="ChEBI" id="CHEBI:15377"/>
        <dbReference type="ChEBI" id="CHEBI:15378"/>
        <dbReference type="ChEBI" id="CHEBI:30616"/>
        <dbReference type="ChEBI" id="CHEBI:43474"/>
        <dbReference type="ChEBI" id="CHEBI:456216"/>
    </reaction>
</comment>
<comment type="subunit">
    <text>Polymerization of globular actin (G-actin) leads to a structural filament (F-actin) in the form of a two-stranded helix. Each actin can bind to 4 others.</text>
</comment>
<comment type="subcellular location">
    <subcellularLocation>
        <location>Cytoplasm</location>
        <location>Cytoskeleton</location>
    </subcellularLocation>
</comment>
<comment type="tissue specificity">
    <text>Expressed in the muscular cells of the sheath surrounding abdominal ganglions.</text>
</comment>
<comment type="similarity">
    <text evidence="3">Belongs to the actin family.</text>
</comment>
<evidence type="ECO:0000250" key="1"/>
<evidence type="ECO:0000250" key="2">
    <source>
        <dbReference type="UniProtKB" id="P68137"/>
    </source>
</evidence>
<evidence type="ECO:0000305" key="3"/>